<reference key="1">
    <citation type="journal article" date="1998" name="Science">
        <title>Genome sequence of an obligate intracellular pathogen of humans: Chlamydia trachomatis.</title>
        <authorList>
            <person name="Stephens R.S."/>
            <person name="Kalman S."/>
            <person name="Lammel C.J."/>
            <person name="Fan J."/>
            <person name="Marathe R."/>
            <person name="Aravind L."/>
            <person name="Mitchell W.P."/>
            <person name="Olinger L."/>
            <person name="Tatusov R.L."/>
            <person name="Zhao Q."/>
            <person name="Koonin E.V."/>
            <person name="Davis R.W."/>
        </authorList>
    </citation>
    <scope>NUCLEOTIDE SEQUENCE [LARGE SCALE GENOMIC DNA]</scope>
    <source>
        <strain>ATCC VR-885 / DSM 19411 / UW-3/Cx</strain>
    </source>
</reference>
<accession>O84341</accession>
<sequence>MSGGNDSVLHRPVEAPLMEDGELSAVFTIRNSSGIHVRPAGTIVKLFEGEECEATLTYLGKTVNARSVMSILMLGASYNGEVAVHIKGPSASRVMQKLSEVFNSGFGEL</sequence>
<comment type="function">
    <text evidence="1">General (non sugar-specific) component of the phosphoenolpyruvate-dependent sugar phosphotransferase system (sugar PTS). This major carbohydrate active-transport system catalyzes the phosphorylation of incoming sugar substrates concomitantly with their translocation across the cell membrane. The phosphoryl group from phosphoenolpyruvate (PEP) is transferred to the phosphoryl carrier protein HPr by enzyme I. Phospho-HPr then transfers it to the PTS EIIA domain.</text>
</comment>
<comment type="subcellular location">
    <subcellularLocation>
        <location evidence="1">Cytoplasm</location>
    </subcellularLocation>
</comment>
<comment type="similarity">
    <text evidence="3">Belongs to the HPr family.</text>
</comment>
<gene>
    <name type="primary">ptsH</name>
    <name type="ordered locus">CT_337</name>
</gene>
<evidence type="ECO:0000250" key="1"/>
<evidence type="ECO:0000255" key="2">
    <source>
        <dbReference type="PROSITE-ProRule" id="PRU00681"/>
    </source>
</evidence>
<evidence type="ECO:0000305" key="3"/>
<name>PTHP_CHLTR</name>
<dbReference type="EMBL" id="AE001273">
    <property type="protein sequence ID" value="AAC67932.1"/>
    <property type="molecule type" value="Genomic_DNA"/>
</dbReference>
<dbReference type="PIR" id="D71528">
    <property type="entry name" value="D71528"/>
</dbReference>
<dbReference type="RefSeq" id="NP_219844.1">
    <property type="nucleotide sequence ID" value="NC_000117.1"/>
</dbReference>
<dbReference type="RefSeq" id="WP_009871687.1">
    <property type="nucleotide sequence ID" value="NC_000117.1"/>
</dbReference>
<dbReference type="SMR" id="O84341"/>
<dbReference type="FunCoup" id="O84341">
    <property type="interactions" value="98"/>
</dbReference>
<dbReference type="STRING" id="272561.CT_337"/>
<dbReference type="EnsemblBacteria" id="AAC67932">
    <property type="protein sequence ID" value="AAC67932"/>
    <property type="gene ID" value="CT_337"/>
</dbReference>
<dbReference type="GeneID" id="884777"/>
<dbReference type="KEGG" id="ctr:CT_337"/>
<dbReference type="PATRIC" id="fig|272561.5.peg.363"/>
<dbReference type="HOGENOM" id="CLU_136230_1_2_0"/>
<dbReference type="InParanoid" id="O84341"/>
<dbReference type="OrthoDB" id="9809047at2"/>
<dbReference type="Proteomes" id="UP000000431">
    <property type="component" value="Chromosome"/>
</dbReference>
<dbReference type="GO" id="GO:0005737">
    <property type="term" value="C:cytoplasm"/>
    <property type="evidence" value="ECO:0007669"/>
    <property type="project" value="UniProtKB-SubCell"/>
</dbReference>
<dbReference type="GO" id="GO:0009401">
    <property type="term" value="P:phosphoenolpyruvate-dependent sugar phosphotransferase system"/>
    <property type="evidence" value="ECO:0000318"/>
    <property type="project" value="GO_Central"/>
</dbReference>
<dbReference type="CDD" id="cd00367">
    <property type="entry name" value="PTS-HPr_like"/>
    <property type="match status" value="1"/>
</dbReference>
<dbReference type="Gene3D" id="3.30.1340.10">
    <property type="entry name" value="HPr-like"/>
    <property type="match status" value="1"/>
</dbReference>
<dbReference type="InterPro" id="IPR050399">
    <property type="entry name" value="HPr"/>
</dbReference>
<dbReference type="InterPro" id="IPR000032">
    <property type="entry name" value="HPr-like"/>
</dbReference>
<dbReference type="InterPro" id="IPR035895">
    <property type="entry name" value="HPr-like_sf"/>
</dbReference>
<dbReference type="InterPro" id="IPR002114">
    <property type="entry name" value="PTS_HPr_Ser_P_site"/>
</dbReference>
<dbReference type="NCBIfam" id="TIGR01003">
    <property type="entry name" value="PTS_HPr_family"/>
    <property type="match status" value="1"/>
</dbReference>
<dbReference type="PANTHER" id="PTHR33705">
    <property type="entry name" value="PHOSPHOCARRIER PROTEIN HPR"/>
    <property type="match status" value="1"/>
</dbReference>
<dbReference type="PANTHER" id="PTHR33705:SF2">
    <property type="entry name" value="PHOSPHOCARRIER PROTEIN NPR"/>
    <property type="match status" value="1"/>
</dbReference>
<dbReference type="Pfam" id="PF00381">
    <property type="entry name" value="PTS-HPr"/>
    <property type="match status" value="1"/>
</dbReference>
<dbReference type="PRINTS" id="PR00107">
    <property type="entry name" value="PHOSPHOCPHPR"/>
</dbReference>
<dbReference type="SUPFAM" id="SSF55594">
    <property type="entry name" value="HPr-like"/>
    <property type="match status" value="1"/>
</dbReference>
<dbReference type="PROSITE" id="PS51350">
    <property type="entry name" value="PTS_HPR_DOM"/>
    <property type="match status" value="1"/>
</dbReference>
<dbReference type="PROSITE" id="PS00589">
    <property type="entry name" value="PTS_HPR_SER"/>
    <property type="match status" value="1"/>
</dbReference>
<keyword id="KW-0963">Cytoplasm</keyword>
<keyword id="KW-0598">Phosphotransferase system</keyword>
<keyword id="KW-1185">Reference proteome</keyword>
<keyword id="KW-0762">Sugar transport</keyword>
<keyword id="KW-0813">Transport</keyword>
<feature type="chain" id="PRO_0000107849" description="Phosphocarrier protein HPr">
    <location>
        <begin position="1"/>
        <end position="109"/>
    </location>
</feature>
<feature type="domain" description="HPr" evidence="2">
    <location>
        <begin position="22"/>
        <end position="109"/>
    </location>
</feature>
<feature type="active site" description="Pros-phosphohistidine intermediate" evidence="2">
    <location>
        <position position="36"/>
    </location>
</feature>
<proteinExistence type="inferred from homology"/>
<organism>
    <name type="scientific">Chlamydia trachomatis serovar D (strain ATCC VR-885 / DSM 19411 / UW-3/Cx)</name>
    <dbReference type="NCBI Taxonomy" id="272561"/>
    <lineage>
        <taxon>Bacteria</taxon>
        <taxon>Pseudomonadati</taxon>
        <taxon>Chlamydiota</taxon>
        <taxon>Chlamydiia</taxon>
        <taxon>Chlamydiales</taxon>
        <taxon>Chlamydiaceae</taxon>
        <taxon>Chlamydia/Chlamydophila group</taxon>
        <taxon>Chlamydia</taxon>
    </lineage>
</organism>
<protein>
    <recommendedName>
        <fullName>Phosphocarrier protein HPr</fullName>
    </recommendedName>
    <alternativeName>
        <fullName>Histidine-containing protein</fullName>
    </alternativeName>
</protein>